<feature type="chain" id="PRO_0000307551" description="Triosephosphate isomerase">
    <location>
        <begin position="1"/>
        <end position="255"/>
    </location>
</feature>
<feature type="active site" description="Electrophile" evidence="1">
    <location>
        <position position="95"/>
    </location>
</feature>
<feature type="active site" description="Proton acceptor" evidence="1">
    <location>
        <position position="167"/>
    </location>
</feature>
<feature type="binding site" evidence="1">
    <location>
        <begin position="9"/>
        <end position="11"/>
    </location>
    <ligand>
        <name>substrate</name>
    </ligand>
</feature>
<feature type="binding site" evidence="1">
    <location>
        <position position="173"/>
    </location>
    <ligand>
        <name>substrate</name>
    </ligand>
</feature>
<feature type="binding site" evidence="1">
    <location>
        <position position="212"/>
    </location>
    <ligand>
        <name>substrate</name>
    </ligand>
</feature>
<feature type="binding site" evidence="1">
    <location>
        <begin position="233"/>
        <end position="234"/>
    </location>
    <ligand>
        <name>substrate</name>
    </ligand>
</feature>
<name>TPIS_SALPA</name>
<comment type="function">
    <text evidence="1">Involved in the gluconeogenesis. Catalyzes stereospecifically the conversion of dihydroxyacetone phosphate (DHAP) to D-glyceraldehyde-3-phosphate (G3P).</text>
</comment>
<comment type="catalytic activity">
    <reaction evidence="1">
        <text>D-glyceraldehyde 3-phosphate = dihydroxyacetone phosphate</text>
        <dbReference type="Rhea" id="RHEA:18585"/>
        <dbReference type="ChEBI" id="CHEBI:57642"/>
        <dbReference type="ChEBI" id="CHEBI:59776"/>
        <dbReference type="EC" id="5.3.1.1"/>
    </reaction>
</comment>
<comment type="pathway">
    <text evidence="1">Carbohydrate biosynthesis; gluconeogenesis.</text>
</comment>
<comment type="pathway">
    <text evidence="1">Carbohydrate degradation; glycolysis; D-glyceraldehyde 3-phosphate from glycerone phosphate: step 1/1.</text>
</comment>
<comment type="subunit">
    <text evidence="1">Homodimer.</text>
</comment>
<comment type="subcellular location">
    <subcellularLocation>
        <location evidence="1">Cytoplasm</location>
    </subcellularLocation>
</comment>
<comment type="similarity">
    <text evidence="1">Belongs to the triosephosphate isomerase family.</text>
</comment>
<keyword id="KW-0963">Cytoplasm</keyword>
<keyword id="KW-0312">Gluconeogenesis</keyword>
<keyword id="KW-0324">Glycolysis</keyword>
<keyword id="KW-0413">Isomerase</keyword>
<dbReference type="EC" id="5.3.1.1" evidence="1"/>
<dbReference type="EMBL" id="CP000026">
    <property type="protein sequence ID" value="AAV79689.1"/>
    <property type="molecule type" value="Genomic_DNA"/>
</dbReference>
<dbReference type="RefSeq" id="WP_001216335.1">
    <property type="nucleotide sequence ID" value="NC_006511.1"/>
</dbReference>
<dbReference type="SMR" id="Q5PJE0"/>
<dbReference type="KEGG" id="spt:SPA3924"/>
<dbReference type="HOGENOM" id="CLU_024251_2_1_6"/>
<dbReference type="UniPathway" id="UPA00109">
    <property type="reaction ID" value="UER00189"/>
</dbReference>
<dbReference type="UniPathway" id="UPA00138"/>
<dbReference type="Proteomes" id="UP000008185">
    <property type="component" value="Chromosome"/>
</dbReference>
<dbReference type="GO" id="GO:0005829">
    <property type="term" value="C:cytosol"/>
    <property type="evidence" value="ECO:0007669"/>
    <property type="project" value="TreeGrafter"/>
</dbReference>
<dbReference type="GO" id="GO:0004807">
    <property type="term" value="F:triose-phosphate isomerase activity"/>
    <property type="evidence" value="ECO:0007669"/>
    <property type="project" value="UniProtKB-UniRule"/>
</dbReference>
<dbReference type="GO" id="GO:0006094">
    <property type="term" value="P:gluconeogenesis"/>
    <property type="evidence" value="ECO:0007669"/>
    <property type="project" value="UniProtKB-UniRule"/>
</dbReference>
<dbReference type="GO" id="GO:0046166">
    <property type="term" value="P:glyceraldehyde-3-phosphate biosynthetic process"/>
    <property type="evidence" value="ECO:0007669"/>
    <property type="project" value="TreeGrafter"/>
</dbReference>
<dbReference type="GO" id="GO:0019563">
    <property type="term" value="P:glycerol catabolic process"/>
    <property type="evidence" value="ECO:0007669"/>
    <property type="project" value="TreeGrafter"/>
</dbReference>
<dbReference type="GO" id="GO:0006096">
    <property type="term" value="P:glycolytic process"/>
    <property type="evidence" value="ECO:0007669"/>
    <property type="project" value="UniProtKB-UniRule"/>
</dbReference>
<dbReference type="CDD" id="cd00311">
    <property type="entry name" value="TIM"/>
    <property type="match status" value="1"/>
</dbReference>
<dbReference type="FunFam" id="3.20.20.70:FF:000020">
    <property type="entry name" value="Triosephosphate isomerase"/>
    <property type="match status" value="1"/>
</dbReference>
<dbReference type="Gene3D" id="3.20.20.70">
    <property type="entry name" value="Aldolase class I"/>
    <property type="match status" value="1"/>
</dbReference>
<dbReference type="HAMAP" id="MF_00147_B">
    <property type="entry name" value="TIM_B"/>
    <property type="match status" value="1"/>
</dbReference>
<dbReference type="InterPro" id="IPR013785">
    <property type="entry name" value="Aldolase_TIM"/>
</dbReference>
<dbReference type="InterPro" id="IPR035990">
    <property type="entry name" value="TIM_sf"/>
</dbReference>
<dbReference type="InterPro" id="IPR022896">
    <property type="entry name" value="TrioseP_Isoase_bac/euk"/>
</dbReference>
<dbReference type="InterPro" id="IPR000652">
    <property type="entry name" value="Triosephosphate_isomerase"/>
</dbReference>
<dbReference type="InterPro" id="IPR020861">
    <property type="entry name" value="Triosephosphate_isomerase_AS"/>
</dbReference>
<dbReference type="NCBIfam" id="TIGR00419">
    <property type="entry name" value="tim"/>
    <property type="match status" value="1"/>
</dbReference>
<dbReference type="PANTHER" id="PTHR21139">
    <property type="entry name" value="TRIOSEPHOSPHATE ISOMERASE"/>
    <property type="match status" value="1"/>
</dbReference>
<dbReference type="PANTHER" id="PTHR21139:SF42">
    <property type="entry name" value="TRIOSEPHOSPHATE ISOMERASE"/>
    <property type="match status" value="1"/>
</dbReference>
<dbReference type="Pfam" id="PF00121">
    <property type="entry name" value="TIM"/>
    <property type="match status" value="1"/>
</dbReference>
<dbReference type="SUPFAM" id="SSF51351">
    <property type="entry name" value="Triosephosphate isomerase (TIM)"/>
    <property type="match status" value="1"/>
</dbReference>
<dbReference type="PROSITE" id="PS00171">
    <property type="entry name" value="TIM_1"/>
    <property type="match status" value="1"/>
</dbReference>
<dbReference type="PROSITE" id="PS51440">
    <property type="entry name" value="TIM_2"/>
    <property type="match status" value="1"/>
</dbReference>
<sequence>MRHPLVMGNWKLNGSRHMVNELVANLRKELAGVAGCDVAIAPPEMYIDLAKRAAAGSHIMLGAQNVDLNLSGAFTGETSAEMLKDIGAQYIIIGHSERRTYHKESDELIAKKFAVLKEQGLTPVLCIGETEAENEAGKTEEVCARQIDAVLKTQGAAAFEGAVIAYEPVWAIGTGKSATPAQAQAVHKFIRDHIAKADAKIAEQVIIQYGGSVNASNAAELFAQPDIDGALVGGASLKADAFAVIVKAAEAAKQA</sequence>
<gene>
    <name evidence="1" type="primary">tpiA</name>
    <name type="ordered locus">SPA3924</name>
</gene>
<organism>
    <name type="scientific">Salmonella paratyphi A (strain ATCC 9150 / SARB42)</name>
    <dbReference type="NCBI Taxonomy" id="295319"/>
    <lineage>
        <taxon>Bacteria</taxon>
        <taxon>Pseudomonadati</taxon>
        <taxon>Pseudomonadota</taxon>
        <taxon>Gammaproteobacteria</taxon>
        <taxon>Enterobacterales</taxon>
        <taxon>Enterobacteriaceae</taxon>
        <taxon>Salmonella</taxon>
    </lineage>
</organism>
<reference key="1">
    <citation type="journal article" date="2004" name="Nat. Genet.">
        <title>Comparison of genome degradation in Paratyphi A and Typhi, human-restricted serovars of Salmonella enterica that cause typhoid.</title>
        <authorList>
            <person name="McClelland M."/>
            <person name="Sanderson K.E."/>
            <person name="Clifton S.W."/>
            <person name="Latreille P."/>
            <person name="Porwollik S."/>
            <person name="Sabo A."/>
            <person name="Meyer R."/>
            <person name="Bieri T."/>
            <person name="Ozersky P."/>
            <person name="McLellan M."/>
            <person name="Harkins C.R."/>
            <person name="Wang C."/>
            <person name="Nguyen C."/>
            <person name="Berghoff A."/>
            <person name="Elliott G."/>
            <person name="Kohlberg S."/>
            <person name="Strong C."/>
            <person name="Du F."/>
            <person name="Carter J."/>
            <person name="Kremizki C."/>
            <person name="Layman D."/>
            <person name="Leonard S."/>
            <person name="Sun H."/>
            <person name="Fulton L."/>
            <person name="Nash W."/>
            <person name="Miner T."/>
            <person name="Minx P."/>
            <person name="Delehaunty K."/>
            <person name="Fronick C."/>
            <person name="Magrini V."/>
            <person name="Nhan M."/>
            <person name="Warren W."/>
            <person name="Florea L."/>
            <person name="Spieth J."/>
            <person name="Wilson R.K."/>
        </authorList>
    </citation>
    <scope>NUCLEOTIDE SEQUENCE [LARGE SCALE GENOMIC DNA]</scope>
    <source>
        <strain>ATCC 9150 / SARB42</strain>
    </source>
</reference>
<evidence type="ECO:0000255" key="1">
    <source>
        <dbReference type="HAMAP-Rule" id="MF_00147"/>
    </source>
</evidence>
<protein>
    <recommendedName>
        <fullName evidence="1">Triosephosphate isomerase</fullName>
        <shortName evidence="1">TIM</shortName>
        <shortName evidence="1">TPI</shortName>
        <ecNumber evidence="1">5.3.1.1</ecNumber>
    </recommendedName>
    <alternativeName>
        <fullName evidence="1">Triose-phosphate isomerase</fullName>
    </alternativeName>
</protein>
<accession>Q5PJE0</accession>
<proteinExistence type="inferred from homology"/>